<organism>
    <name type="scientific">Rubrobacter xylanophilus (strain DSM 9941 / JCM 11954 / NBRC 16129 / PRD-1)</name>
    <dbReference type="NCBI Taxonomy" id="266117"/>
    <lineage>
        <taxon>Bacteria</taxon>
        <taxon>Bacillati</taxon>
        <taxon>Actinomycetota</taxon>
        <taxon>Rubrobacteria</taxon>
        <taxon>Rubrobacterales</taxon>
        <taxon>Rubrobacteraceae</taxon>
        <taxon>Rubrobacter</taxon>
    </lineage>
</organism>
<evidence type="ECO:0000255" key="1">
    <source>
        <dbReference type="HAMAP-Rule" id="MF_00022"/>
    </source>
</evidence>
<comment type="function">
    <text evidence="1">Catalyzes the attachment of glutamate to tRNA(Glu) in a two-step reaction: glutamate is first activated by ATP to form Glu-AMP and then transferred to the acceptor end of tRNA(Glu).</text>
</comment>
<comment type="catalytic activity">
    <reaction evidence="1">
        <text>tRNA(Glu) + L-glutamate + ATP = L-glutamyl-tRNA(Glu) + AMP + diphosphate</text>
        <dbReference type="Rhea" id="RHEA:23540"/>
        <dbReference type="Rhea" id="RHEA-COMP:9663"/>
        <dbReference type="Rhea" id="RHEA-COMP:9680"/>
        <dbReference type="ChEBI" id="CHEBI:29985"/>
        <dbReference type="ChEBI" id="CHEBI:30616"/>
        <dbReference type="ChEBI" id="CHEBI:33019"/>
        <dbReference type="ChEBI" id="CHEBI:78442"/>
        <dbReference type="ChEBI" id="CHEBI:78520"/>
        <dbReference type="ChEBI" id="CHEBI:456215"/>
        <dbReference type="EC" id="6.1.1.17"/>
    </reaction>
</comment>
<comment type="subunit">
    <text evidence="1">Monomer.</text>
</comment>
<comment type="subcellular location">
    <subcellularLocation>
        <location evidence="1">Cytoplasm</location>
    </subcellularLocation>
</comment>
<comment type="similarity">
    <text evidence="1">Belongs to the class-I aminoacyl-tRNA synthetase family. Glutamate--tRNA ligase type 1 subfamily.</text>
</comment>
<sequence>MEASRQVRVRYAPSPTGRLHVGGVRTALFNWLFARKHGGVFILRIEDTDLERSTEESVEQLKRSLRWIGLDWDEGPDVGGPHAPYRQTERLELYRRAARRLLESGAAYYDFATPEELTRFRQRARAEGRPPIYTGGPYREMDPEEALRRVRMGEPHTVRFKTPREGRTVFEDIIRGPVGFENATIEDFVLLKSTGTPTYNFAAAVDDAEMQITHVIRGDDHISNTPRQIMIHRALGHELPAFAHVPQVLGPDRKKLSKRHGAASVEDFAEQGILPEALFNYLALLGAGYAADEEIFAPEELAERFRLEKVSGNPAIFDEQKLLAINAVYIRRKSPEELAMLAAPMLSERGVADAGELERDMPRLVRIMELLRERLQRTTDIPEAAGYFYGERLDYDREQFEKQFGKEFVRENLPELYRRLKALPEWTADAIESCVRGLAAEKEKGARHLIHPLRFATTGRTVSAGLFETMELIGRERCLLRIADVLERLQSPERSL</sequence>
<name>SYE2_RUBXD</name>
<gene>
    <name evidence="1" type="primary">gltX2</name>
    <name type="ordered locus">Rxyl_2856</name>
</gene>
<feature type="chain" id="PRO_0000367768" description="Glutamate--tRNA ligase 2">
    <location>
        <begin position="1"/>
        <end position="496"/>
    </location>
</feature>
<feature type="short sequence motif" description="'HIGH' region" evidence="1">
    <location>
        <begin position="13"/>
        <end position="23"/>
    </location>
</feature>
<feature type="short sequence motif" description="'KMSKS' region" evidence="1">
    <location>
        <begin position="255"/>
        <end position="259"/>
    </location>
</feature>
<feature type="binding site" evidence="1">
    <location>
        <position position="258"/>
    </location>
    <ligand>
        <name>ATP</name>
        <dbReference type="ChEBI" id="CHEBI:30616"/>
    </ligand>
</feature>
<protein>
    <recommendedName>
        <fullName evidence="1">Glutamate--tRNA ligase 2</fullName>
        <ecNumber evidence="1">6.1.1.17</ecNumber>
    </recommendedName>
    <alternativeName>
        <fullName evidence="1">Glutamyl-tRNA synthetase 2</fullName>
        <shortName evidence="1">GluRS 2</shortName>
    </alternativeName>
</protein>
<keyword id="KW-0030">Aminoacyl-tRNA synthetase</keyword>
<keyword id="KW-0067">ATP-binding</keyword>
<keyword id="KW-0963">Cytoplasm</keyword>
<keyword id="KW-0436">Ligase</keyword>
<keyword id="KW-0547">Nucleotide-binding</keyword>
<keyword id="KW-0648">Protein biosynthesis</keyword>
<keyword id="KW-1185">Reference proteome</keyword>
<reference key="1">
    <citation type="submission" date="2006-06" db="EMBL/GenBank/DDBJ databases">
        <title>Complete sequence of Rubrobacter xylanophilus DSM 9941.</title>
        <authorList>
            <consortium name="US DOE Joint Genome Institute"/>
            <person name="Copeland A."/>
            <person name="Lucas S."/>
            <person name="Lapidus A."/>
            <person name="Barry K."/>
            <person name="Detter J.C."/>
            <person name="Glavina del Rio T."/>
            <person name="Hammon N."/>
            <person name="Israni S."/>
            <person name="Dalin E."/>
            <person name="Tice H."/>
            <person name="Pitluck S."/>
            <person name="Munk A.C."/>
            <person name="Brettin T."/>
            <person name="Bruce D."/>
            <person name="Han C."/>
            <person name="Tapia R."/>
            <person name="Gilna P."/>
            <person name="Schmutz J."/>
            <person name="Larimer F."/>
            <person name="Land M."/>
            <person name="Hauser L."/>
            <person name="Kyrpides N."/>
            <person name="Lykidis A."/>
            <person name="da Costa M.S."/>
            <person name="Rainey F.A."/>
            <person name="Empadinhas N."/>
            <person name="Jolivet E."/>
            <person name="Battista J.R."/>
            <person name="Richardson P."/>
        </authorList>
    </citation>
    <scope>NUCLEOTIDE SEQUENCE [LARGE SCALE GENOMIC DNA]</scope>
    <source>
        <strain>DSM 9941 / JCM 11954 / NBRC 16129 / PRD-1</strain>
    </source>
</reference>
<dbReference type="EC" id="6.1.1.17" evidence="1"/>
<dbReference type="EMBL" id="CP000386">
    <property type="protein sequence ID" value="ABG05768.1"/>
    <property type="molecule type" value="Genomic_DNA"/>
</dbReference>
<dbReference type="RefSeq" id="WP_011565777.1">
    <property type="nucleotide sequence ID" value="NC_008148.1"/>
</dbReference>
<dbReference type="SMR" id="Q1AS60"/>
<dbReference type="STRING" id="266117.Rxyl_2856"/>
<dbReference type="KEGG" id="rxy:Rxyl_2856"/>
<dbReference type="eggNOG" id="COG0008">
    <property type="taxonomic scope" value="Bacteria"/>
</dbReference>
<dbReference type="HOGENOM" id="CLU_015768_6_3_11"/>
<dbReference type="OrthoDB" id="9807503at2"/>
<dbReference type="PhylomeDB" id="Q1AS60"/>
<dbReference type="Proteomes" id="UP000006637">
    <property type="component" value="Chromosome"/>
</dbReference>
<dbReference type="GO" id="GO:0005829">
    <property type="term" value="C:cytosol"/>
    <property type="evidence" value="ECO:0007669"/>
    <property type="project" value="TreeGrafter"/>
</dbReference>
<dbReference type="GO" id="GO:0005524">
    <property type="term" value="F:ATP binding"/>
    <property type="evidence" value="ECO:0007669"/>
    <property type="project" value="UniProtKB-UniRule"/>
</dbReference>
<dbReference type="GO" id="GO:0004818">
    <property type="term" value="F:glutamate-tRNA ligase activity"/>
    <property type="evidence" value="ECO:0007669"/>
    <property type="project" value="UniProtKB-UniRule"/>
</dbReference>
<dbReference type="GO" id="GO:0000049">
    <property type="term" value="F:tRNA binding"/>
    <property type="evidence" value="ECO:0007669"/>
    <property type="project" value="InterPro"/>
</dbReference>
<dbReference type="GO" id="GO:0008270">
    <property type="term" value="F:zinc ion binding"/>
    <property type="evidence" value="ECO:0007669"/>
    <property type="project" value="InterPro"/>
</dbReference>
<dbReference type="GO" id="GO:0006424">
    <property type="term" value="P:glutamyl-tRNA aminoacylation"/>
    <property type="evidence" value="ECO:0007669"/>
    <property type="project" value="UniProtKB-UniRule"/>
</dbReference>
<dbReference type="CDD" id="cd00808">
    <property type="entry name" value="GluRS_core"/>
    <property type="match status" value="1"/>
</dbReference>
<dbReference type="FunFam" id="3.40.50.620:FF:000045">
    <property type="entry name" value="Glutamate--tRNA ligase, mitochondrial"/>
    <property type="match status" value="1"/>
</dbReference>
<dbReference type="Gene3D" id="1.10.10.350">
    <property type="match status" value="1"/>
</dbReference>
<dbReference type="Gene3D" id="3.40.50.620">
    <property type="entry name" value="HUPs"/>
    <property type="match status" value="1"/>
</dbReference>
<dbReference type="HAMAP" id="MF_00022">
    <property type="entry name" value="Glu_tRNA_synth_type1"/>
    <property type="match status" value="1"/>
</dbReference>
<dbReference type="InterPro" id="IPR045462">
    <property type="entry name" value="aa-tRNA-synth_I_cd-bd"/>
</dbReference>
<dbReference type="InterPro" id="IPR020751">
    <property type="entry name" value="aa-tRNA-synth_I_codon-bd_sub2"/>
</dbReference>
<dbReference type="InterPro" id="IPR001412">
    <property type="entry name" value="aa-tRNA-synth_I_CS"/>
</dbReference>
<dbReference type="InterPro" id="IPR008925">
    <property type="entry name" value="aa_tRNA-synth_I_cd-bd_sf"/>
</dbReference>
<dbReference type="InterPro" id="IPR004527">
    <property type="entry name" value="Glu-tRNA-ligase_bac/mito"/>
</dbReference>
<dbReference type="InterPro" id="IPR000924">
    <property type="entry name" value="Glu/Gln-tRNA-synth"/>
</dbReference>
<dbReference type="InterPro" id="IPR020058">
    <property type="entry name" value="Glu/Gln-tRNA-synth_Ib_cat-dom"/>
</dbReference>
<dbReference type="InterPro" id="IPR049940">
    <property type="entry name" value="GluQ/Sye"/>
</dbReference>
<dbReference type="InterPro" id="IPR033910">
    <property type="entry name" value="GluRS_core"/>
</dbReference>
<dbReference type="InterPro" id="IPR014729">
    <property type="entry name" value="Rossmann-like_a/b/a_fold"/>
</dbReference>
<dbReference type="NCBIfam" id="TIGR00464">
    <property type="entry name" value="gltX_bact"/>
    <property type="match status" value="1"/>
</dbReference>
<dbReference type="PANTHER" id="PTHR43311">
    <property type="entry name" value="GLUTAMATE--TRNA LIGASE"/>
    <property type="match status" value="1"/>
</dbReference>
<dbReference type="PANTHER" id="PTHR43311:SF2">
    <property type="entry name" value="GLUTAMATE--TRNA LIGASE, MITOCHONDRIAL-RELATED"/>
    <property type="match status" value="1"/>
</dbReference>
<dbReference type="Pfam" id="PF19269">
    <property type="entry name" value="Anticodon_2"/>
    <property type="match status" value="1"/>
</dbReference>
<dbReference type="Pfam" id="PF00749">
    <property type="entry name" value="tRNA-synt_1c"/>
    <property type="match status" value="1"/>
</dbReference>
<dbReference type="PRINTS" id="PR00987">
    <property type="entry name" value="TRNASYNTHGLU"/>
</dbReference>
<dbReference type="SUPFAM" id="SSF48163">
    <property type="entry name" value="An anticodon-binding domain of class I aminoacyl-tRNA synthetases"/>
    <property type="match status" value="1"/>
</dbReference>
<dbReference type="SUPFAM" id="SSF52374">
    <property type="entry name" value="Nucleotidylyl transferase"/>
    <property type="match status" value="1"/>
</dbReference>
<dbReference type="PROSITE" id="PS00178">
    <property type="entry name" value="AA_TRNA_LIGASE_I"/>
    <property type="match status" value="1"/>
</dbReference>
<proteinExistence type="inferred from homology"/>
<accession>Q1AS60</accession>